<sequence length="253" mass="28744">MMKSGADLQFPPGFRFHPTDEELVLMYLCRKCASQPIPAPIITELDLYRYDPWDLPDMALYGEKEWYFFSPRDRKYPNGSRPNRAAGTGYWKATGADKPIGRPKPVGIKKALVFYSGKPPNGEKTNWIMHEYRLADVDRSVRKKNSLRLDDWVLCRIYNKKGVIEKRRSDIEDGLKPVTDTCPPESVARLISGSEQAVSPEFTCSNGRLSNALDFPFNYVDAIADNEIVSRLLGGNQMWSTTLDPLVVRQGTF</sequence>
<feature type="chain" id="PRO_0000437979" description="NAC transcription factor 32">
    <location>
        <begin position="1"/>
        <end position="253"/>
    </location>
</feature>
<feature type="domain" description="NAC" evidence="1">
    <location>
        <begin position="10"/>
        <end position="160"/>
    </location>
</feature>
<feature type="DNA-binding region" evidence="1">
    <location>
        <begin position="106"/>
        <end position="166"/>
    </location>
</feature>
<feature type="sequence conflict" description="In Ref. 5; AAM65083." evidence="5" ref="5">
    <original>K</original>
    <variation>N</variation>
    <location>
        <position position="31"/>
    </location>
</feature>
<feature type="sequence conflict" description="In Ref. 5; AAM65083." evidence="5" ref="5">
    <original>R</original>
    <variation>L</variation>
    <location>
        <position position="142"/>
    </location>
</feature>
<accession>Q9CAR0</accession>
<accession>Q8LAX7</accession>
<organism>
    <name type="scientific">Arabidopsis thaliana</name>
    <name type="common">Mouse-ear cress</name>
    <dbReference type="NCBI Taxonomy" id="3702"/>
    <lineage>
        <taxon>Eukaryota</taxon>
        <taxon>Viridiplantae</taxon>
        <taxon>Streptophyta</taxon>
        <taxon>Embryophyta</taxon>
        <taxon>Tracheophyta</taxon>
        <taxon>Spermatophyta</taxon>
        <taxon>Magnoliopsida</taxon>
        <taxon>eudicotyledons</taxon>
        <taxon>Gunneridae</taxon>
        <taxon>Pentapetalae</taxon>
        <taxon>rosids</taxon>
        <taxon>malvids</taxon>
        <taxon>Brassicales</taxon>
        <taxon>Brassicaceae</taxon>
        <taxon>Camelineae</taxon>
        <taxon>Arabidopsis</taxon>
    </lineage>
</organism>
<name>NAC32_ARATH</name>
<gene>
    <name evidence="5" type="primary">NAC032</name>
    <name evidence="5" type="synonym">NAC32</name>
    <name evidence="6" type="ordered locus">At1g77450</name>
    <name evidence="7" type="ORF">T5M16.4</name>
</gene>
<proteinExistence type="evidence at transcript level"/>
<comment type="function">
    <text evidence="2 3 4">Transcriptional activator that positively regulates age-dependent senescence, dark-induced leaf senescence and stress-induced senescence. Regulates leaf senescence through the modulation of the expression of senescence-associated genes SGR1/NYE1, SAG113 and SAUR36/SAG201, which are involved in chlorophyll degradation, and abscisic acid (ABA) and auxin promotion of senescence, respectively. Promotes reactive oxygen species (ROS) production during age-dependent and stress-induced senescence. Positively regulates auxin-mediated responses in roots (PubMed:27388337). Stress-responsive NAC transcription factor involved in ABA-inducible leaf senescence signaling (PubMed:26518251). Required for normal seed development and morphology (PubMed:18849494).</text>
</comment>
<comment type="subcellular location">
    <subcellularLocation>
        <location evidence="1 4">Nucleus</location>
    </subcellularLocation>
</comment>
<comment type="tissue specificity">
    <text evidence="4">Expressed in germinating seeds, roots, leaf veins, open flowers and silique stalks.</text>
</comment>
<comment type="induction">
    <text evidence="3 4">By abscisic acid (ABA) (PubMed:26518251). Induced by salinity and osmotic stress, and during leaf senescence (PubMed:27388337).</text>
</comment>
<comment type="domain">
    <text evidence="1">The NAC domain includes a DNA binding domain and a dimerization domain.</text>
</comment>
<comment type="miscellaneous">
    <text evidence="2">Plants silencing NAC032 produce abnormally shaped seeds.</text>
</comment>
<comment type="sequence caution" evidence="5">
    <conflict type="erroneous initiation">
        <sequence resource="EMBL-CDS" id="AAM65083"/>
    </conflict>
    <text>Truncated N-terminus.</text>
</comment>
<keyword id="KW-0010">Activator</keyword>
<keyword id="KW-0238">DNA-binding</keyword>
<keyword id="KW-0539">Nucleus</keyword>
<keyword id="KW-1185">Reference proteome</keyword>
<keyword id="KW-0346">Stress response</keyword>
<keyword id="KW-0804">Transcription</keyword>
<keyword id="KW-0805">Transcription regulation</keyword>
<protein>
    <recommendedName>
        <fullName evidence="5">NAC transcription factor 32</fullName>
    </recommendedName>
    <alternativeName>
        <fullName evidence="5">NAC domain-containing protein 32</fullName>
        <shortName evidence="5">ANAC032</shortName>
    </alternativeName>
</protein>
<dbReference type="EMBL" id="AC010704">
    <property type="protein sequence ID" value="AAG51675.1"/>
    <property type="molecule type" value="Genomic_DNA"/>
</dbReference>
<dbReference type="EMBL" id="CP002684">
    <property type="protein sequence ID" value="AEE35979.1"/>
    <property type="molecule type" value="Genomic_DNA"/>
</dbReference>
<dbReference type="EMBL" id="AK118985">
    <property type="protein sequence ID" value="BAC43561.1"/>
    <property type="molecule type" value="mRNA"/>
</dbReference>
<dbReference type="EMBL" id="BT008538">
    <property type="protein sequence ID" value="AAP40365.1"/>
    <property type="molecule type" value="mRNA"/>
</dbReference>
<dbReference type="EMBL" id="AY087541">
    <property type="protein sequence ID" value="AAM65083.1"/>
    <property type="status" value="ALT_INIT"/>
    <property type="molecule type" value="mRNA"/>
</dbReference>
<dbReference type="PIR" id="G96803">
    <property type="entry name" value="G96803"/>
</dbReference>
<dbReference type="RefSeq" id="NP_177869.1">
    <property type="nucleotide sequence ID" value="NM_106394.3"/>
</dbReference>
<dbReference type="SMR" id="Q9CAR0"/>
<dbReference type="IntAct" id="Q9CAR0">
    <property type="interactions" value="34"/>
</dbReference>
<dbReference type="STRING" id="3702.Q9CAR0"/>
<dbReference type="PaxDb" id="3702-AT1G77450.1"/>
<dbReference type="ProteomicsDB" id="251270"/>
<dbReference type="EnsemblPlants" id="AT1G77450.1">
    <property type="protein sequence ID" value="AT1G77450.1"/>
    <property type="gene ID" value="AT1G77450"/>
</dbReference>
<dbReference type="GeneID" id="844081"/>
<dbReference type="Gramene" id="AT1G77450.1">
    <property type="protein sequence ID" value="AT1G77450.1"/>
    <property type="gene ID" value="AT1G77450"/>
</dbReference>
<dbReference type="KEGG" id="ath:AT1G77450"/>
<dbReference type="Araport" id="AT1G77450"/>
<dbReference type="TAIR" id="AT1G77450">
    <property type="gene designation" value="NAC032"/>
</dbReference>
<dbReference type="eggNOG" id="ENOG502QVRF">
    <property type="taxonomic scope" value="Eukaryota"/>
</dbReference>
<dbReference type="HOGENOM" id="CLU_035664_3_1_1"/>
<dbReference type="InParanoid" id="Q9CAR0"/>
<dbReference type="OMA" id="PEFTCEA"/>
<dbReference type="OrthoDB" id="1921961at2759"/>
<dbReference type="PhylomeDB" id="Q9CAR0"/>
<dbReference type="PRO" id="PR:Q9CAR0"/>
<dbReference type="Proteomes" id="UP000006548">
    <property type="component" value="Chromosome 1"/>
</dbReference>
<dbReference type="ExpressionAtlas" id="Q9CAR0">
    <property type="expression patterns" value="baseline and differential"/>
</dbReference>
<dbReference type="GO" id="GO:0005634">
    <property type="term" value="C:nucleus"/>
    <property type="evidence" value="ECO:0000314"/>
    <property type="project" value="TAIR"/>
</dbReference>
<dbReference type="GO" id="GO:0001216">
    <property type="term" value="F:DNA-binding transcription activator activity"/>
    <property type="evidence" value="ECO:0000314"/>
    <property type="project" value="TAIR"/>
</dbReference>
<dbReference type="GO" id="GO:0003700">
    <property type="term" value="F:DNA-binding transcription factor activity"/>
    <property type="evidence" value="ECO:0000250"/>
    <property type="project" value="TAIR"/>
</dbReference>
<dbReference type="GO" id="GO:0000976">
    <property type="term" value="F:transcription cis-regulatory region binding"/>
    <property type="evidence" value="ECO:0000353"/>
    <property type="project" value="TAIR"/>
</dbReference>
<dbReference type="GO" id="GO:0009793">
    <property type="term" value="P:embryo development ending in seed dormancy"/>
    <property type="evidence" value="ECO:0000315"/>
    <property type="project" value="UniProtKB"/>
</dbReference>
<dbReference type="GO" id="GO:0045893">
    <property type="term" value="P:positive regulation of DNA-templated transcription"/>
    <property type="evidence" value="ECO:0000314"/>
    <property type="project" value="UniProtKB"/>
</dbReference>
<dbReference type="GO" id="GO:1900057">
    <property type="term" value="P:positive regulation of leaf senescence"/>
    <property type="evidence" value="ECO:0000315"/>
    <property type="project" value="UniProtKB"/>
</dbReference>
<dbReference type="GO" id="GO:1902890">
    <property type="term" value="P:regulation of root hair elongation"/>
    <property type="evidence" value="ECO:0000315"/>
    <property type="project" value="TAIR"/>
</dbReference>
<dbReference type="FunFam" id="2.170.150.80:FF:000004">
    <property type="entry name" value="NAC transcription factor"/>
    <property type="match status" value="1"/>
</dbReference>
<dbReference type="Gene3D" id="2.170.150.80">
    <property type="entry name" value="NAC domain"/>
    <property type="match status" value="1"/>
</dbReference>
<dbReference type="InterPro" id="IPR003441">
    <property type="entry name" value="NAC-dom"/>
</dbReference>
<dbReference type="InterPro" id="IPR036093">
    <property type="entry name" value="NAC_dom_sf"/>
</dbReference>
<dbReference type="PANTHER" id="PTHR31719:SF122">
    <property type="entry name" value="NAC TRANSCRIPTION FACTOR 32"/>
    <property type="match status" value="1"/>
</dbReference>
<dbReference type="PANTHER" id="PTHR31719">
    <property type="entry name" value="NAC TRANSCRIPTION FACTOR 56"/>
    <property type="match status" value="1"/>
</dbReference>
<dbReference type="Pfam" id="PF02365">
    <property type="entry name" value="NAM"/>
    <property type="match status" value="1"/>
</dbReference>
<dbReference type="SUPFAM" id="SSF101941">
    <property type="entry name" value="NAC domain"/>
    <property type="match status" value="1"/>
</dbReference>
<dbReference type="PROSITE" id="PS51005">
    <property type="entry name" value="NAC"/>
    <property type="match status" value="1"/>
</dbReference>
<reference key="1">
    <citation type="journal article" date="2000" name="Nature">
        <title>Sequence and analysis of chromosome 1 of the plant Arabidopsis thaliana.</title>
        <authorList>
            <person name="Theologis A."/>
            <person name="Ecker J.R."/>
            <person name="Palm C.J."/>
            <person name="Federspiel N.A."/>
            <person name="Kaul S."/>
            <person name="White O."/>
            <person name="Alonso J."/>
            <person name="Altafi H."/>
            <person name="Araujo R."/>
            <person name="Bowman C.L."/>
            <person name="Brooks S.Y."/>
            <person name="Buehler E."/>
            <person name="Chan A."/>
            <person name="Chao Q."/>
            <person name="Chen H."/>
            <person name="Cheuk R.F."/>
            <person name="Chin C.W."/>
            <person name="Chung M.K."/>
            <person name="Conn L."/>
            <person name="Conway A.B."/>
            <person name="Conway A.R."/>
            <person name="Creasy T.H."/>
            <person name="Dewar K."/>
            <person name="Dunn P."/>
            <person name="Etgu P."/>
            <person name="Feldblyum T.V."/>
            <person name="Feng J.-D."/>
            <person name="Fong B."/>
            <person name="Fujii C.Y."/>
            <person name="Gill J.E."/>
            <person name="Goldsmith A.D."/>
            <person name="Haas B."/>
            <person name="Hansen N.F."/>
            <person name="Hughes B."/>
            <person name="Huizar L."/>
            <person name="Hunter J.L."/>
            <person name="Jenkins J."/>
            <person name="Johnson-Hopson C."/>
            <person name="Khan S."/>
            <person name="Khaykin E."/>
            <person name="Kim C.J."/>
            <person name="Koo H.L."/>
            <person name="Kremenetskaia I."/>
            <person name="Kurtz D.B."/>
            <person name="Kwan A."/>
            <person name="Lam B."/>
            <person name="Langin-Hooper S."/>
            <person name="Lee A."/>
            <person name="Lee J.M."/>
            <person name="Lenz C.A."/>
            <person name="Li J.H."/>
            <person name="Li Y.-P."/>
            <person name="Lin X."/>
            <person name="Liu S.X."/>
            <person name="Liu Z.A."/>
            <person name="Luros J.S."/>
            <person name="Maiti R."/>
            <person name="Marziali A."/>
            <person name="Militscher J."/>
            <person name="Miranda M."/>
            <person name="Nguyen M."/>
            <person name="Nierman W.C."/>
            <person name="Osborne B.I."/>
            <person name="Pai G."/>
            <person name="Peterson J."/>
            <person name="Pham P.K."/>
            <person name="Rizzo M."/>
            <person name="Rooney T."/>
            <person name="Rowley D."/>
            <person name="Sakano H."/>
            <person name="Salzberg S.L."/>
            <person name="Schwartz J.R."/>
            <person name="Shinn P."/>
            <person name="Southwick A.M."/>
            <person name="Sun H."/>
            <person name="Tallon L.J."/>
            <person name="Tambunga G."/>
            <person name="Toriumi M.J."/>
            <person name="Town C.D."/>
            <person name="Utterback T."/>
            <person name="Van Aken S."/>
            <person name="Vaysberg M."/>
            <person name="Vysotskaia V.S."/>
            <person name="Walker M."/>
            <person name="Wu D."/>
            <person name="Yu G."/>
            <person name="Fraser C.M."/>
            <person name="Venter J.C."/>
            <person name="Davis R.W."/>
        </authorList>
    </citation>
    <scope>NUCLEOTIDE SEQUENCE [LARGE SCALE GENOMIC DNA]</scope>
    <source>
        <strain>cv. Columbia</strain>
    </source>
</reference>
<reference key="2">
    <citation type="journal article" date="2017" name="Plant J.">
        <title>Araport11: a complete reannotation of the Arabidopsis thaliana reference genome.</title>
        <authorList>
            <person name="Cheng C.Y."/>
            <person name="Krishnakumar V."/>
            <person name="Chan A.P."/>
            <person name="Thibaud-Nissen F."/>
            <person name="Schobel S."/>
            <person name="Town C.D."/>
        </authorList>
    </citation>
    <scope>GENOME REANNOTATION</scope>
    <source>
        <strain>cv. Columbia</strain>
    </source>
</reference>
<reference key="3">
    <citation type="journal article" date="2002" name="Science">
        <title>Functional annotation of a full-length Arabidopsis cDNA collection.</title>
        <authorList>
            <person name="Seki M."/>
            <person name="Narusaka M."/>
            <person name="Kamiya A."/>
            <person name="Ishida J."/>
            <person name="Satou M."/>
            <person name="Sakurai T."/>
            <person name="Nakajima M."/>
            <person name="Enju A."/>
            <person name="Akiyama K."/>
            <person name="Oono Y."/>
            <person name="Muramatsu M."/>
            <person name="Hayashizaki Y."/>
            <person name="Kawai J."/>
            <person name="Carninci P."/>
            <person name="Itoh M."/>
            <person name="Ishii Y."/>
            <person name="Arakawa T."/>
            <person name="Shibata K."/>
            <person name="Shinagawa A."/>
            <person name="Shinozaki K."/>
        </authorList>
    </citation>
    <scope>NUCLEOTIDE SEQUENCE [LARGE SCALE MRNA]</scope>
    <source>
        <strain>cv. Columbia</strain>
    </source>
</reference>
<reference key="4">
    <citation type="journal article" date="2003" name="Science">
        <title>Empirical analysis of transcriptional activity in the Arabidopsis genome.</title>
        <authorList>
            <person name="Yamada K."/>
            <person name="Lim J."/>
            <person name="Dale J.M."/>
            <person name="Chen H."/>
            <person name="Shinn P."/>
            <person name="Palm C.J."/>
            <person name="Southwick A.M."/>
            <person name="Wu H.C."/>
            <person name="Kim C.J."/>
            <person name="Nguyen M."/>
            <person name="Pham P.K."/>
            <person name="Cheuk R.F."/>
            <person name="Karlin-Newmann G."/>
            <person name="Liu S.X."/>
            <person name="Lam B."/>
            <person name="Sakano H."/>
            <person name="Wu T."/>
            <person name="Yu G."/>
            <person name="Miranda M."/>
            <person name="Quach H.L."/>
            <person name="Tripp M."/>
            <person name="Chang C.H."/>
            <person name="Lee J.M."/>
            <person name="Toriumi M.J."/>
            <person name="Chan M.M."/>
            <person name="Tang C.C."/>
            <person name="Onodera C.S."/>
            <person name="Deng J.M."/>
            <person name="Akiyama K."/>
            <person name="Ansari Y."/>
            <person name="Arakawa T."/>
            <person name="Banh J."/>
            <person name="Banno F."/>
            <person name="Bowser L."/>
            <person name="Brooks S.Y."/>
            <person name="Carninci P."/>
            <person name="Chao Q."/>
            <person name="Choy N."/>
            <person name="Enju A."/>
            <person name="Goldsmith A.D."/>
            <person name="Gurjal M."/>
            <person name="Hansen N.F."/>
            <person name="Hayashizaki Y."/>
            <person name="Johnson-Hopson C."/>
            <person name="Hsuan V.W."/>
            <person name="Iida K."/>
            <person name="Karnes M."/>
            <person name="Khan S."/>
            <person name="Koesema E."/>
            <person name="Ishida J."/>
            <person name="Jiang P.X."/>
            <person name="Jones T."/>
            <person name="Kawai J."/>
            <person name="Kamiya A."/>
            <person name="Meyers C."/>
            <person name="Nakajima M."/>
            <person name="Narusaka M."/>
            <person name="Seki M."/>
            <person name="Sakurai T."/>
            <person name="Satou M."/>
            <person name="Tamse R."/>
            <person name="Vaysberg M."/>
            <person name="Wallender E.K."/>
            <person name="Wong C."/>
            <person name="Yamamura Y."/>
            <person name="Yuan S."/>
            <person name="Shinozaki K."/>
            <person name="Davis R.W."/>
            <person name="Theologis A."/>
            <person name="Ecker J.R."/>
        </authorList>
    </citation>
    <scope>NUCLEOTIDE SEQUENCE [LARGE SCALE MRNA]</scope>
    <source>
        <strain>cv. Columbia</strain>
    </source>
</reference>
<reference key="5">
    <citation type="submission" date="2002-03" db="EMBL/GenBank/DDBJ databases">
        <title>Full-length cDNA from Arabidopsis thaliana.</title>
        <authorList>
            <person name="Brover V.V."/>
            <person name="Troukhan M.E."/>
            <person name="Alexandrov N.A."/>
            <person name="Lu Y.-P."/>
            <person name="Flavell R.B."/>
            <person name="Feldmann K.A."/>
        </authorList>
    </citation>
    <scope>NUCLEOTIDE SEQUENCE [LARGE SCALE MRNA]</scope>
</reference>
<reference key="6">
    <citation type="journal article" date="2008" name="Plant Cell">
        <title>NAC family proteins NARS1/NAC2 and NARS2/NAM in the outer integument regulate embryogenesis in Arabidopsis.</title>
        <authorList>
            <person name="Kunieda T."/>
            <person name="Mitsuda N."/>
            <person name="Ohme-Takagi M."/>
            <person name="Takeda S."/>
            <person name="Aida M."/>
            <person name="Tasaka M."/>
            <person name="Kondo M."/>
            <person name="Nishimura M."/>
            <person name="Hara-Nishimura I."/>
        </authorList>
    </citation>
    <scope>FUNCTION</scope>
</reference>
<reference key="7">
    <citation type="journal article" date="2015" name="Plant J.">
        <title>SNAC-As, stress-responsive NAC transcription factors, mediate ABA-inducible leaf senescence.</title>
        <authorList>
            <person name="Takasaki H."/>
            <person name="Maruyama K."/>
            <person name="Takahashi F."/>
            <person name="Fujita M."/>
            <person name="Yoshida T."/>
            <person name="Nakashima K."/>
            <person name="Myouga F."/>
            <person name="Toyooka K."/>
            <person name="Yamaguchi-Shinozaki K."/>
            <person name="Shinozaki K."/>
        </authorList>
    </citation>
    <scope>FUNCTION</scope>
    <scope>INDUCTION BY ABSCISIC ACID</scope>
</reference>
<reference key="8">
    <citation type="journal article" date="2016" name="Plant Cell Physiol.">
        <title>ANAC032 positively regulates age-dependent and stress-induced senescence in Arabidopsis thaliana.</title>
        <authorList>
            <person name="Mahmood K."/>
            <person name="El-Kereamy A."/>
            <person name="Kim S.H."/>
            <person name="Nambara E."/>
            <person name="Rothstein S.J."/>
        </authorList>
    </citation>
    <scope>FUNCTION</scope>
    <scope>SUBCELLULAR LOCATION</scope>
    <scope>TISSUE SPECIFICITY</scope>
    <scope>INDUCTION</scope>
</reference>
<evidence type="ECO:0000255" key="1">
    <source>
        <dbReference type="PROSITE-ProRule" id="PRU00353"/>
    </source>
</evidence>
<evidence type="ECO:0000269" key="2">
    <source>
    </source>
</evidence>
<evidence type="ECO:0000269" key="3">
    <source>
    </source>
</evidence>
<evidence type="ECO:0000269" key="4">
    <source>
    </source>
</evidence>
<evidence type="ECO:0000305" key="5"/>
<evidence type="ECO:0000312" key="6">
    <source>
        <dbReference type="Araport" id="AT1G77450"/>
    </source>
</evidence>
<evidence type="ECO:0000312" key="7">
    <source>
        <dbReference type="EMBL" id="AAG51675.1"/>
    </source>
</evidence>